<gene>
    <name evidence="5 10" type="primary">Pdhb</name>
    <name evidence="10" type="ORF">CG11876</name>
</gene>
<evidence type="ECO:0000250" key="1">
    <source>
        <dbReference type="UniProtKB" id="P11177"/>
    </source>
</evidence>
<evidence type="ECO:0000255" key="2"/>
<evidence type="ECO:0000255" key="3">
    <source>
        <dbReference type="RuleBase" id="RU364074"/>
    </source>
</evidence>
<evidence type="ECO:0000269" key="4">
    <source>
    </source>
</evidence>
<evidence type="ECO:0000303" key="5">
    <source>
    </source>
</evidence>
<evidence type="ECO:0000305" key="6"/>
<evidence type="ECO:0000312" key="7">
    <source>
        <dbReference type="EMBL" id="AAK77305.1"/>
    </source>
</evidence>
<evidence type="ECO:0000312" key="8">
    <source>
        <dbReference type="EMBL" id="AAN71511.1"/>
    </source>
</evidence>
<evidence type="ECO:0000312" key="9">
    <source>
        <dbReference type="EMBL" id="ABC86336.1"/>
    </source>
</evidence>
<evidence type="ECO:0000312" key="10">
    <source>
        <dbReference type="FlyBase" id="FBgn0039635"/>
    </source>
</evidence>
<evidence type="ECO:0000312" key="11">
    <source>
        <dbReference type="Proteomes" id="UP000000803"/>
    </source>
</evidence>
<name>ODPB_DROME</name>
<reference evidence="11" key="1">
    <citation type="journal article" date="2000" name="Science">
        <title>The genome sequence of Drosophila melanogaster.</title>
        <authorList>
            <person name="Adams M.D."/>
            <person name="Celniker S.E."/>
            <person name="Holt R.A."/>
            <person name="Evans C.A."/>
            <person name="Gocayne J.D."/>
            <person name="Amanatides P.G."/>
            <person name="Scherer S.E."/>
            <person name="Li P.W."/>
            <person name="Hoskins R.A."/>
            <person name="Galle R.F."/>
            <person name="George R.A."/>
            <person name="Lewis S.E."/>
            <person name="Richards S."/>
            <person name="Ashburner M."/>
            <person name="Henderson S.N."/>
            <person name="Sutton G.G."/>
            <person name="Wortman J.R."/>
            <person name="Yandell M.D."/>
            <person name="Zhang Q."/>
            <person name="Chen L.X."/>
            <person name="Brandon R.C."/>
            <person name="Rogers Y.-H.C."/>
            <person name="Blazej R.G."/>
            <person name="Champe M."/>
            <person name="Pfeiffer B.D."/>
            <person name="Wan K.H."/>
            <person name="Doyle C."/>
            <person name="Baxter E.G."/>
            <person name="Helt G."/>
            <person name="Nelson C.R."/>
            <person name="Miklos G.L.G."/>
            <person name="Abril J.F."/>
            <person name="Agbayani A."/>
            <person name="An H.-J."/>
            <person name="Andrews-Pfannkoch C."/>
            <person name="Baldwin D."/>
            <person name="Ballew R.M."/>
            <person name="Basu A."/>
            <person name="Baxendale J."/>
            <person name="Bayraktaroglu L."/>
            <person name="Beasley E.M."/>
            <person name="Beeson K.Y."/>
            <person name="Benos P.V."/>
            <person name="Berman B.P."/>
            <person name="Bhandari D."/>
            <person name="Bolshakov S."/>
            <person name="Borkova D."/>
            <person name="Botchan M.R."/>
            <person name="Bouck J."/>
            <person name="Brokstein P."/>
            <person name="Brottier P."/>
            <person name="Burtis K.C."/>
            <person name="Busam D.A."/>
            <person name="Butler H."/>
            <person name="Cadieu E."/>
            <person name="Center A."/>
            <person name="Chandra I."/>
            <person name="Cherry J.M."/>
            <person name="Cawley S."/>
            <person name="Dahlke C."/>
            <person name="Davenport L.B."/>
            <person name="Davies P."/>
            <person name="de Pablos B."/>
            <person name="Delcher A."/>
            <person name="Deng Z."/>
            <person name="Mays A.D."/>
            <person name="Dew I."/>
            <person name="Dietz S.M."/>
            <person name="Dodson K."/>
            <person name="Doup L.E."/>
            <person name="Downes M."/>
            <person name="Dugan-Rocha S."/>
            <person name="Dunkov B.C."/>
            <person name="Dunn P."/>
            <person name="Durbin K.J."/>
            <person name="Evangelista C.C."/>
            <person name="Ferraz C."/>
            <person name="Ferriera S."/>
            <person name="Fleischmann W."/>
            <person name="Fosler C."/>
            <person name="Gabrielian A.E."/>
            <person name="Garg N.S."/>
            <person name="Gelbart W.M."/>
            <person name="Glasser K."/>
            <person name="Glodek A."/>
            <person name="Gong F."/>
            <person name="Gorrell J.H."/>
            <person name="Gu Z."/>
            <person name="Guan P."/>
            <person name="Harris M."/>
            <person name="Harris N.L."/>
            <person name="Harvey D.A."/>
            <person name="Heiman T.J."/>
            <person name="Hernandez J.R."/>
            <person name="Houck J."/>
            <person name="Hostin D."/>
            <person name="Houston K.A."/>
            <person name="Howland T.J."/>
            <person name="Wei M.-H."/>
            <person name="Ibegwam C."/>
            <person name="Jalali M."/>
            <person name="Kalush F."/>
            <person name="Karpen G.H."/>
            <person name="Ke Z."/>
            <person name="Kennison J.A."/>
            <person name="Ketchum K.A."/>
            <person name="Kimmel B.E."/>
            <person name="Kodira C.D."/>
            <person name="Kraft C.L."/>
            <person name="Kravitz S."/>
            <person name="Kulp D."/>
            <person name="Lai Z."/>
            <person name="Lasko P."/>
            <person name="Lei Y."/>
            <person name="Levitsky A.A."/>
            <person name="Li J.H."/>
            <person name="Li Z."/>
            <person name="Liang Y."/>
            <person name="Lin X."/>
            <person name="Liu X."/>
            <person name="Mattei B."/>
            <person name="McIntosh T.C."/>
            <person name="McLeod M.P."/>
            <person name="McPherson D."/>
            <person name="Merkulov G."/>
            <person name="Milshina N.V."/>
            <person name="Mobarry C."/>
            <person name="Morris J."/>
            <person name="Moshrefi A."/>
            <person name="Mount S.M."/>
            <person name="Moy M."/>
            <person name="Murphy B."/>
            <person name="Murphy L."/>
            <person name="Muzny D.M."/>
            <person name="Nelson D.L."/>
            <person name="Nelson D.R."/>
            <person name="Nelson K.A."/>
            <person name="Nixon K."/>
            <person name="Nusskern D.R."/>
            <person name="Pacleb J.M."/>
            <person name="Palazzolo M."/>
            <person name="Pittman G.S."/>
            <person name="Pan S."/>
            <person name="Pollard J."/>
            <person name="Puri V."/>
            <person name="Reese M.G."/>
            <person name="Reinert K."/>
            <person name="Remington K."/>
            <person name="Saunders R.D.C."/>
            <person name="Scheeler F."/>
            <person name="Shen H."/>
            <person name="Shue B.C."/>
            <person name="Siden-Kiamos I."/>
            <person name="Simpson M."/>
            <person name="Skupski M.P."/>
            <person name="Smith T.J."/>
            <person name="Spier E."/>
            <person name="Spradling A.C."/>
            <person name="Stapleton M."/>
            <person name="Strong R."/>
            <person name="Sun E."/>
            <person name="Svirskas R."/>
            <person name="Tector C."/>
            <person name="Turner R."/>
            <person name="Venter E."/>
            <person name="Wang A.H."/>
            <person name="Wang X."/>
            <person name="Wang Z.-Y."/>
            <person name="Wassarman D.A."/>
            <person name="Weinstock G.M."/>
            <person name="Weissenbach J."/>
            <person name="Williams S.M."/>
            <person name="Woodage T."/>
            <person name="Worley K.C."/>
            <person name="Wu D."/>
            <person name="Yang S."/>
            <person name="Yao Q.A."/>
            <person name="Ye J."/>
            <person name="Yeh R.-F."/>
            <person name="Zaveri J.S."/>
            <person name="Zhan M."/>
            <person name="Zhang G."/>
            <person name="Zhao Q."/>
            <person name="Zheng L."/>
            <person name="Zheng X.H."/>
            <person name="Zhong F.N."/>
            <person name="Zhong W."/>
            <person name="Zhou X."/>
            <person name="Zhu S.C."/>
            <person name="Zhu X."/>
            <person name="Smith H.O."/>
            <person name="Gibbs R.A."/>
            <person name="Myers E.W."/>
            <person name="Rubin G.M."/>
            <person name="Venter J.C."/>
        </authorList>
    </citation>
    <scope>NUCLEOTIDE SEQUENCE [LARGE SCALE GENOMIC DNA]</scope>
    <source>
        <strain evidence="11">Berkeley</strain>
    </source>
</reference>
<reference evidence="11" key="2">
    <citation type="journal article" date="2002" name="Genome Biol.">
        <title>Annotation of the Drosophila melanogaster euchromatic genome: a systematic review.</title>
        <authorList>
            <person name="Misra S."/>
            <person name="Crosby M.A."/>
            <person name="Mungall C.J."/>
            <person name="Matthews B.B."/>
            <person name="Campbell K.S."/>
            <person name="Hradecky P."/>
            <person name="Huang Y."/>
            <person name="Kaminker J.S."/>
            <person name="Millburn G.H."/>
            <person name="Prochnik S.E."/>
            <person name="Smith C.D."/>
            <person name="Tupy J.L."/>
            <person name="Whitfield E.J."/>
            <person name="Bayraktaroglu L."/>
            <person name="Berman B.P."/>
            <person name="Bettencourt B.R."/>
            <person name="Celniker S.E."/>
            <person name="de Grey A.D.N.J."/>
            <person name="Drysdale R.A."/>
            <person name="Harris N.L."/>
            <person name="Richter J."/>
            <person name="Russo S."/>
            <person name="Schroeder A.J."/>
            <person name="Shu S.Q."/>
            <person name="Stapleton M."/>
            <person name="Yamada C."/>
            <person name="Ashburner M."/>
            <person name="Gelbart W.M."/>
            <person name="Rubin G.M."/>
            <person name="Lewis S.E."/>
        </authorList>
    </citation>
    <scope>GENOME REANNOTATION</scope>
    <source>
        <strain evidence="11">Berkeley</strain>
    </source>
</reference>
<reference evidence="7 8" key="3">
    <citation type="journal article" date="2002" name="Genome Biol.">
        <title>A Drosophila full-length cDNA resource.</title>
        <authorList>
            <person name="Stapleton M."/>
            <person name="Carlson J.W."/>
            <person name="Brokstein P."/>
            <person name="Yu C."/>
            <person name="Champe M."/>
            <person name="George R.A."/>
            <person name="Guarin H."/>
            <person name="Kronmiller B."/>
            <person name="Pacleb J.M."/>
            <person name="Park S."/>
            <person name="Wan K.H."/>
            <person name="Rubin G.M."/>
            <person name="Celniker S.E."/>
        </authorList>
    </citation>
    <scope>NUCLEOTIDE SEQUENCE [LARGE SCALE MRNA]</scope>
    <source>
        <strain evidence="7 8">Berkeley</strain>
        <tissue evidence="7 8">Head</tissue>
    </source>
</reference>
<reference evidence="9" key="4">
    <citation type="submission" date="2006-01" db="EMBL/GenBank/DDBJ databases">
        <authorList>
            <person name="Stapleton M."/>
            <person name="Carlson J."/>
            <person name="Chavez C."/>
            <person name="Frise E."/>
            <person name="George R."/>
            <person name="Pacleb J."/>
            <person name="Park S."/>
            <person name="Wan K."/>
            <person name="Yu C."/>
            <person name="Celniker S."/>
        </authorList>
    </citation>
    <scope>NUCLEOTIDE SEQUENCE [LARGE SCALE MRNA] (ISOFORM B)</scope>
</reference>
<reference evidence="6" key="5">
    <citation type="journal article" date="2018" name="Exp. Cell Res.">
        <title>Neuron-specific knockdown of Drosophila PDHB induces reduction of lifespan, deficient locomotive ability, abnormal morphology of motor neuron terminals and photoreceptor axon targeting.</title>
        <authorList>
            <person name="Dung V.M."/>
            <person name="Suong D.N.A."/>
            <person name="Okamaoto Y."/>
            <person name="Hiramatsu Y."/>
            <person name="Thao D.T.P."/>
            <person name="Yoshida H."/>
            <person name="Takashima H."/>
            <person name="Yamaguchi M."/>
        </authorList>
    </citation>
    <scope>FUNCTION</scope>
    <scope>SUBCELLULAR LOCATION</scope>
    <scope>TISSUE SPECIFICITY</scope>
    <scope>DISRUPTION PHENOTYPE</scope>
</reference>
<proteinExistence type="evidence at protein level"/>
<accession>Q7K5K3</accession>
<accession>Q8IGJ4</accession>
<accession>Q8IML6</accession>
<protein>
    <recommendedName>
        <fullName evidence="6">Pyruvate dehydrogenase E1 component subunit beta, mitochondrial</fullName>
        <ecNumber evidence="3">1.2.4.1</ecNumber>
    </recommendedName>
</protein>
<keyword id="KW-0025">Alternative splicing</keyword>
<keyword id="KW-0479">Metal-binding</keyword>
<keyword id="KW-0496">Mitochondrion</keyword>
<keyword id="KW-0560">Oxidoreductase</keyword>
<keyword id="KW-0630">Potassium</keyword>
<keyword id="KW-0670">Pyruvate</keyword>
<keyword id="KW-1185">Reference proteome</keyword>
<keyword id="KW-0786">Thiamine pyrophosphate</keyword>
<keyword id="KW-0809">Transit peptide</keyword>
<organism evidence="11">
    <name type="scientific">Drosophila melanogaster</name>
    <name type="common">Fruit fly</name>
    <dbReference type="NCBI Taxonomy" id="7227"/>
    <lineage>
        <taxon>Eukaryota</taxon>
        <taxon>Metazoa</taxon>
        <taxon>Ecdysozoa</taxon>
        <taxon>Arthropoda</taxon>
        <taxon>Hexapoda</taxon>
        <taxon>Insecta</taxon>
        <taxon>Pterygota</taxon>
        <taxon>Neoptera</taxon>
        <taxon>Endopterygota</taxon>
        <taxon>Diptera</taxon>
        <taxon>Brachycera</taxon>
        <taxon>Muscomorpha</taxon>
        <taxon>Ephydroidea</taxon>
        <taxon>Drosophilidae</taxon>
        <taxon>Drosophila</taxon>
        <taxon>Sophophora</taxon>
    </lineage>
</organism>
<sequence length="365" mass="39351">MLRTRLIQAASSAQRAFSTSQKALAAKQMTVRDALNSALDDELARDDRVFILGEEVAQYDGAYKVSRGLWKKYGDKRVIDTPITEMGFAGIAVGAAMAGLRPVCEFMTWNFSMQAIDHIINSAAKTFYMSAGAVNVPIVFRGPNGAASGVAAQHSQCFAAWYAHCPGLKVLSPYDAEDARGLLKSAIRDPDPVVFLENELVYGTAFPVADNVADKDFLVPIGKAKVMRPGKDITLVAHSKAVETSLLAAAELAKKGIEAEVINLRSIRPLDTATIFASVRKTHHLVTVENGWPQHGVGAEICARIMEDQTFFELDAPVWRCAGVDVPMPYAKTLEAHALPRVQDLVEATLKVLGGKVGKAAAANK</sequence>
<feature type="transit peptide" description="Mitochondrion" evidence="2">
    <location>
        <begin position="1"/>
        <end position="24"/>
    </location>
</feature>
<feature type="chain" id="PRO_0000456719" description="Pyruvate dehydrogenase E1 component subunit beta, mitochondrial" evidence="2">
    <location>
        <begin position="25"/>
        <end position="365"/>
    </location>
</feature>
<feature type="binding site" evidence="1">
    <location>
        <position position="85"/>
    </location>
    <ligand>
        <name>thiamine diphosphate</name>
        <dbReference type="ChEBI" id="CHEBI:58937"/>
        <note>ligand shared with alpha subunit</note>
    </ligand>
</feature>
<feature type="binding site" evidence="1">
    <location>
        <position position="138"/>
    </location>
    <ligand>
        <name>K(+)</name>
        <dbReference type="ChEBI" id="CHEBI:29103"/>
        <note>structural</note>
    </ligand>
</feature>
<feature type="binding site" evidence="1">
    <location>
        <position position="186"/>
    </location>
    <ligand>
        <name>K(+)</name>
        <dbReference type="ChEBI" id="CHEBI:29103"/>
        <note>structural</note>
    </ligand>
</feature>
<feature type="binding site" evidence="1">
    <location>
        <position position="187"/>
    </location>
    <ligand>
        <name>K(+)</name>
        <dbReference type="ChEBI" id="CHEBI:29103"/>
        <note>structural</note>
    </ligand>
</feature>
<feature type="binding site" evidence="1">
    <location>
        <position position="189"/>
    </location>
    <ligand>
        <name>K(+)</name>
        <dbReference type="ChEBI" id="CHEBI:29103"/>
        <note>structural</note>
    </ligand>
</feature>
<feature type="splice variant" id="VSP_061669" description="In isoform B.">
    <original>IINSAAKTFYMSAGAVNVPIVFRGPNGAASGVAAQHSQCFAAWYAHCPGLKVLSPYDAEDARGLLKSAIRDPDPVVFLENELVYGTAFPVADNVADKDFLVPIGKAKVMRPGKDITLVAHSKAVETSLLAAAELAKKGIEAEVINLRSIRPLDTA</original>
    <variation>AKILDCAKPPVGDRPLPISLIIESPRSTWLNEINDILHRDRVGEVIAPPLDKSKSDKMEAARLIVIRRRKMKKHKLKKLRRKMKFEWAKVRQRREMRKEKAFQAKLISQIKQAEAFSAEQHVAEILRQANETPLPRFWKGRRLPAFIIKQKLGIK</variation>
    <location>
        <begin position="119"/>
        <end position="273"/>
    </location>
</feature>
<feature type="splice variant" id="VSP_061670" description="In isoform B.">
    <location>
        <begin position="274"/>
        <end position="365"/>
    </location>
</feature>
<feature type="sequence conflict" description="In Ref. 3; AAN71511." evidence="6" ref="3">
    <original>V</original>
    <variation>A</variation>
    <location>
        <position position="342"/>
    </location>
</feature>
<dbReference type="EC" id="1.2.4.1" evidence="3"/>
<dbReference type="EMBL" id="AE014297">
    <property type="protein sequence ID" value="AAF56855.2"/>
    <property type="molecule type" value="Genomic_DNA"/>
</dbReference>
<dbReference type="EMBL" id="AE014297">
    <property type="protein sequence ID" value="AAN14149.1"/>
    <property type="molecule type" value="Genomic_DNA"/>
</dbReference>
<dbReference type="EMBL" id="AE014297">
    <property type="protein sequence ID" value="AAN14150.1"/>
    <property type="molecule type" value="Genomic_DNA"/>
</dbReference>
<dbReference type="EMBL" id="AE014297">
    <property type="protein sequence ID" value="AAN14151.1"/>
    <property type="molecule type" value="Genomic_DNA"/>
</dbReference>
<dbReference type="EMBL" id="AY047573">
    <property type="protein sequence ID" value="AAK77305.1"/>
    <property type="molecule type" value="mRNA"/>
</dbReference>
<dbReference type="EMBL" id="BT001756">
    <property type="protein sequence ID" value="AAN71511.1"/>
    <property type="molecule type" value="mRNA"/>
</dbReference>
<dbReference type="EMBL" id="BT024274">
    <property type="protein sequence ID" value="ABC86336.1"/>
    <property type="molecule type" value="mRNA"/>
</dbReference>
<dbReference type="RefSeq" id="NP_651668.1">
    <molecule id="Q7K5K3-1"/>
    <property type="nucleotide sequence ID" value="NM_143411.4"/>
</dbReference>
<dbReference type="RefSeq" id="NP_733265.1">
    <molecule id="Q7K5K3-1"/>
    <property type="nucleotide sequence ID" value="NM_170386.2"/>
</dbReference>
<dbReference type="RefSeq" id="NP_733266.1">
    <molecule id="Q7K5K3-2"/>
    <property type="nucleotide sequence ID" value="NM_170387.2"/>
</dbReference>
<dbReference type="RefSeq" id="NP_733267.1">
    <molecule id="Q7K5K3-2"/>
    <property type="nucleotide sequence ID" value="NM_170388.2"/>
</dbReference>
<dbReference type="SMR" id="Q7K5K3"/>
<dbReference type="FunCoup" id="Q7K5K3">
    <property type="interactions" value="1707"/>
</dbReference>
<dbReference type="IntAct" id="Q7K5K3">
    <property type="interactions" value="36"/>
</dbReference>
<dbReference type="STRING" id="7227.FBpp0084735"/>
<dbReference type="PaxDb" id="7227-FBpp0084735"/>
<dbReference type="DNASU" id="43437"/>
<dbReference type="EnsemblMetazoa" id="FBtr0085366">
    <molecule id="Q7K5K3-1"/>
    <property type="protein sequence ID" value="FBpp0084735"/>
    <property type="gene ID" value="FBgn0039635"/>
</dbReference>
<dbReference type="EnsemblMetazoa" id="FBtr0085367">
    <molecule id="Q7K5K3-2"/>
    <property type="protein sequence ID" value="FBpp0084736"/>
    <property type="gene ID" value="FBgn0039635"/>
</dbReference>
<dbReference type="EnsemblMetazoa" id="FBtr0085368">
    <molecule id="Q7K5K3-2"/>
    <property type="protein sequence ID" value="FBpp0084737"/>
    <property type="gene ID" value="FBgn0039635"/>
</dbReference>
<dbReference type="EnsemblMetazoa" id="FBtr0085369">
    <molecule id="Q7K5K3-1"/>
    <property type="protein sequence ID" value="FBpp0084738"/>
    <property type="gene ID" value="FBgn0039635"/>
</dbReference>
<dbReference type="GeneID" id="43437"/>
<dbReference type="KEGG" id="dme:Dmel_CG11876"/>
<dbReference type="UCSC" id="CG11876-RA">
    <molecule id="Q7K5K3-1"/>
    <property type="organism name" value="d. melanogaster"/>
</dbReference>
<dbReference type="UCSC" id="CG11876-RB">
    <property type="organism name" value="d. melanogaster"/>
</dbReference>
<dbReference type="AGR" id="FB:FBgn0039635"/>
<dbReference type="CTD" id="5162"/>
<dbReference type="FlyBase" id="FBgn0039635">
    <property type="gene designation" value="Pdhb"/>
</dbReference>
<dbReference type="VEuPathDB" id="VectorBase:FBgn0039635"/>
<dbReference type="eggNOG" id="KOG0524">
    <property type="taxonomic scope" value="Eukaryota"/>
</dbReference>
<dbReference type="GeneTree" id="ENSGT00940000155146"/>
<dbReference type="HOGENOM" id="CLU_012907_1_1_1"/>
<dbReference type="InParanoid" id="Q7K5K3"/>
<dbReference type="OMA" id="WYANCPG"/>
<dbReference type="OrthoDB" id="10266385at2759"/>
<dbReference type="Reactome" id="R-DME-204174">
    <property type="pathway name" value="Regulation of pyruvate dehydrogenase (PDH) complex"/>
</dbReference>
<dbReference type="Reactome" id="R-DME-5362517">
    <property type="pathway name" value="Signaling by Retinoic Acid"/>
</dbReference>
<dbReference type="Reactome" id="R-DME-9837999">
    <property type="pathway name" value="Mitochondrial protein degradation"/>
</dbReference>
<dbReference type="Reactome" id="R-DME-9861559">
    <property type="pathway name" value="PDH complex synthesizes acetyl-CoA from PYR"/>
</dbReference>
<dbReference type="BioGRID-ORCS" id="43437">
    <property type="hits" value="2 hits in 3 CRISPR screens"/>
</dbReference>
<dbReference type="ChiTaRS" id="Pdh">
    <property type="organism name" value="fly"/>
</dbReference>
<dbReference type="GenomeRNAi" id="43437"/>
<dbReference type="PRO" id="PR:Q7K5K3"/>
<dbReference type="Proteomes" id="UP000000803">
    <property type="component" value="Chromosome 3R"/>
</dbReference>
<dbReference type="Bgee" id="FBgn0039635">
    <property type="expression patterns" value="Expressed in second segment of antenna (Drosophila) and 264 other cell types or tissues"/>
</dbReference>
<dbReference type="ExpressionAtlas" id="Q7K5K3">
    <property type="expression patterns" value="baseline and differential"/>
</dbReference>
<dbReference type="GO" id="GO:0005759">
    <property type="term" value="C:mitochondrial matrix"/>
    <property type="evidence" value="ECO:0007669"/>
    <property type="project" value="UniProtKB-SubCell"/>
</dbReference>
<dbReference type="GO" id="GO:0005739">
    <property type="term" value="C:mitochondrion"/>
    <property type="evidence" value="ECO:0000314"/>
    <property type="project" value="FlyBase"/>
</dbReference>
<dbReference type="GO" id="GO:0045254">
    <property type="term" value="C:pyruvate dehydrogenase complex"/>
    <property type="evidence" value="ECO:0000318"/>
    <property type="project" value="GO_Central"/>
</dbReference>
<dbReference type="GO" id="GO:0046872">
    <property type="term" value="F:metal ion binding"/>
    <property type="evidence" value="ECO:0007669"/>
    <property type="project" value="UniProtKB-KW"/>
</dbReference>
<dbReference type="GO" id="GO:0004739">
    <property type="term" value="F:pyruvate dehydrogenase (acetyl-transferring) activity"/>
    <property type="evidence" value="ECO:0000318"/>
    <property type="project" value="GO_Central"/>
</dbReference>
<dbReference type="GO" id="GO:0006086">
    <property type="term" value="P:pyruvate decarboxylation to acetyl-CoA"/>
    <property type="evidence" value="ECO:0000250"/>
    <property type="project" value="FlyBase"/>
</dbReference>
<dbReference type="CDD" id="cd07036">
    <property type="entry name" value="TPP_PYR_E1-PDHc-beta_like"/>
    <property type="match status" value="1"/>
</dbReference>
<dbReference type="FunFam" id="3.40.50.920:FF:000001">
    <property type="entry name" value="Pyruvate dehydrogenase E1 beta subunit"/>
    <property type="match status" value="1"/>
</dbReference>
<dbReference type="FunFam" id="3.40.50.970:FF:000006">
    <property type="entry name" value="Pyruvate dehydrogenase E1 component subunit beta"/>
    <property type="match status" value="1"/>
</dbReference>
<dbReference type="Gene3D" id="3.40.50.920">
    <property type="match status" value="1"/>
</dbReference>
<dbReference type="Gene3D" id="3.40.50.970">
    <property type="match status" value="1"/>
</dbReference>
<dbReference type="InterPro" id="IPR027110">
    <property type="entry name" value="PDHB_mito-type"/>
</dbReference>
<dbReference type="InterPro" id="IPR029061">
    <property type="entry name" value="THDP-binding"/>
</dbReference>
<dbReference type="InterPro" id="IPR009014">
    <property type="entry name" value="Transketo_C/PFOR_II"/>
</dbReference>
<dbReference type="InterPro" id="IPR005475">
    <property type="entry name" value="Transketolase-like_Pyr-bd"/>
</dbReference>
<dbReference type="InterPro" id="IPR033248">
    <property type="entry name" value="Transketolase_C"/>
</dbReference>
<dbReference type="NCBIfam" id="NF006667">
    <property type="entry name" value="PRK09212.1"/>
    <property type="match status" value="1"/>
</dbReference>
<dbReference type="NCBIfam" id="NF008854">
    <property type="entry name" value="PRK11892.1"/>
    <property type="match status" value="1"/>
</dbReference>
<dbReference type="PANTHER" id="PTHR11624">
    <property type="entry name" value="DEHYDROGENASE RELATED"/>
    <property type="match status" value="1"/>
</dbReference>
<dbReference type="PANTHER" id="PTHR11624:SF96">
    <property type="entry name" value="PYRUVATE DEHYDROGENASE E1 COMPONENT SUBUNIT BETA, MITOCHONDRIAL"/>
    <property type="match status" value="1"/>
</dbReference>
<dbReference type="Pfam" id="PF02779">
    <property type="entry name" value="Transket_pyr"/>
    <property type="match status" value="1"/>
</dbReference>
<dbReference type="Pfam" id="PF02780">
    <property type="entry name" value="Transketolase_C"/>
    <property type="match status" value="1"/>
</dbReference>
<dbReference type="SMART" id="SM00861">
    <property type="entry name" value="Transket_pyr"/>
    <property type="match status" value="1"/>
</dbReference>
<dbReference type="SUPFAM" id="SSF52518">
    <property type="entry name" value="Thiamin diphosphate-binding fold (THDP-binding)"/>
    <property type="match status" value="1"/>
</dbReference>
<dbReference type="SUPFAM" id="SSF52922">
    <property type="entry name" value="TK C-terminal domain-like"/>
    <property type="match status" value="1"/>
</dbReference>
<comment type="function">
    <text evidence="3 4">The pyruvate dehydrogenase complex catalyzes the overall conversion of pyruvate to acetyl-CoA and CO(2) (By similarity). Might play a role in regulating synapse structure formation at neuromuscular junctions (PubMed:29501567). Might play a role in maintenance of mitochondrial morphology (PubMed:29501567).</text>
</comment>
<comment type="catalytic activity">
    <reaction evidence="3">
        <text>N(6)-[(R)-lipoyl]-L-lysyl-[protein] + pyruvate + H(+) = N(6)-[(R)-S(8)-acetyldihydrolipoyl]-L-lysyl-[protein] + CO2</text>
        <dbReference type="Rhea" id="RHEA:19189"/>
        <dbReference type="Rhea" id="RHEA-COMP:10474"/>
        <dbReference type="Rhea" id="RHEA-COMP:10478"/>
        <dbReference type="ChEBI" id="CHEBI:15361"/>
        <dbReference type="ChEBI" id="CHEBI:15378"/>
        <dbReference type="ChEBI" id="CHEBI:16526"/>
        <dbReference type="ChEBI" id="CHEBI:83099"/>
        <dbReference type="ChEBI" id="CHEBI:83111"/>
        <dbReference type="EC" id="1.2.4.1"/>
    </reaction>
</comment>
<comment type="cofactor">
    <cofactor evidence="3">
        <name>thiamine diphosphate</name>
        <dbReference type="ChEBI" id="CHEBI:58937"/>
    </cofactor>
</comment>
<comment type="interaction">
    <interactant intactId="EBI-163004">
        <id>Q7K5K3</id>
    </interactant>
    <interactant intactId="EBI-218468">
        <id>Q9W4H6</id>
        <label>Pdha</label>
    </interactant>
    <organismsDiffer>false</organismsDiffer>
    <experiments>3</experiments>
</comment>
<comment type="subcellular location">
    <subcellularLocation>
        <location evidence="4">Mitochondrion matrix</location>
    </subcellularLocation>
</comment>
<comment type="alternative products">
    <event type="alternative splicing"/>
    <isoform>
        <id>Q7K5K3-1</id>
        <name evidence="10">A</name>
        <name evidence="10">D</name>
        <sequence type="displayed"/>
    </isoform>
    <isoform>
        <id>Q7K5K3-2</id>
        <name evidence="10">B</name>
        <name evidence="10">C</name>
        <sequence type="described" ref="VSP_061669 VSP_061670"/>
    </isoform>
</comment>
<comment type="tissue specificity">
    <text evidence="4">Expressed in salivary glands (at protein level).</text>
</comment>
<comment type="disruption phenotype">
    <text evidence="4">RNAi-mediated knockdown in neurons reduces life span of adult flies and results in locomotor defects at both larval and adult stages accompanied by abnormal morphology of motor neuron terminals at neuromuscular junctions and mitochondrial fragmentation in brains (PubMed:29501567). RNAi-mediated knockdown in eye disks induces morphologically aberrant rough eye phenotype in adults and aberrant photoreceptor axon targeting (PubMed:29501567).</text>
</comment>